<keyword id="KW-0997">Cell inner membrane</keyword>
<keyword id="KW-1003">Cell membrane</keyword>
<keyword id="KW-0472">Membrane</keyword>
<keyword id="KW-0653">Protein transport</keyword>
<keyword id="KW-0811">Translocation</keyword>
<keyword id="KW-0812">Transmembrane</keyword>
<keyword id="KW-1133">Transmembrane helix</keyword>
<keyword id="KW-0813">Transport</keyword>
<feature type="chain" id="PRO_0000336629" description="Sec-independent protein translocase protein TatA">
    <location>
        <begin position="1"/>
        <end position="61"/>
    </location>
</feature>
<feature type="transmembrane region" description="Helical" evidence="1">
    <location>
        <begin position="2"/>
        <end position="22"/>
    </location>
</feature>
<reference key="1">
    <citation type="submission" date="2006-11" db="EMBL/GenBank/DDBJ databases">
        <title>Identification and characterization of a new conjugation/ type IVA secretion system (trb/tra) of L. pneumophila Corby localized on a mobile genomic island.</title>
        <authorList>
            <person name="Gloeckner G."/>
            <person name="Albert-Weissenberger C."/>
            <person name="Weinmann E."/>
            <person name="Jacobi S."/>
            <person name="Schunder E."/>
            <person name="Steinert M."/>
            <person name="Buchrieser C."/>
            <person name="Hacker J."/>
            <person name="Heuner K."/>
        </authorList>
    </citation>
    <scope>NUCLEOTIDE SEQUENCE [LARGE SCALE GENOMIC DNA]</scope>
    <source>
        <strain>Corby</strain>
    </source>
</reference>
<protein>
    <recommendedName>
        <fullName evidence="1">Sec-independent protein translocase protein TatA</fullName>
    </recommendedName>
</protein>
<organism>
    <name type="scientific">Legionella pneumophila (strain Corby)</name>
    <dbReference type="NCBI Taxonomy" id="400673"/>
    <lineage>
        <taxon>Bacteria</taxon>
        <taxon>Pseudomonadati</taxon>
        <taxon>Pseudomonadota</taxon>
        <taxon>Gammaproteobacteria</taxon>
        <taxon>Legionellales</taxon>
        <taxon>Legionellaceae</taxon>
        <taxon>Legionella</taxon>
    </lineage>
</organism>
<dbReference type="EMBL" id="CP000675">
    <property type="protein sequence ID" value="ABQ57094.1"/>
    <property type="molecule type" value="Genomic_DNA"/>
</dbReference>
<dbReference type="RefSeq" id="WP_011947797.1">
    <property type="nucleotide sequence ID" value="NZ_JAPMSS010000004.1"/>
</dbReference>
<dbReference type="SMR" id="A5II94"/>
<dbReference type="KEGG" id="lpc:LPC_3207"/>
<dbReference type="HOGENOM" id="CLU_086034_6_1_6"/>
<dbReference type="GO" id="GO:0033281">
    <property type="term" value="C:TAT protein transport complex"/>
    <property type="evidence" value="ECO:0007669"/>
    <property type="project" value="UniProtKB-UniRule"/>
</dbReference>
<dbReference type="GO" id="GO:0008320">
    <property type="term" value="F:protein transmembrane transporter activity"/>
    <property type="evidence" value="ECO:0007669"/>
    <property type="project" value="UniProtKB-UniRule"/>
</dbReference>
<dbReference type="GO" id="GO:0043953">
    <property type="term" value="P:protein transport by the Tat complex"/>
    <property type="evidence" value="ECO:0007669"/>
    <property type="project" value="UniProtKB-UniRule"/>
</dbReference>
<dbReference type="Gene3D" id="1.20.5.3310">
    <property type="match status" value="1"/>
</dbReference>
<dbReference type="HAMAP" id="MF_00236">
    <property type="entry name" value="TatA_E"/>
    <property type="match status" value="1"/>
</dbReference>
<dbReference type="InterPro" id="IPR003369">
    <property type="entry name" value="TatA/B/E"/>
</dbReference>
<dbReference type="InterPro" id="IPR006312">
    <property type="entry name" value="TatA/E"/>
</dbReference>
<dbReference type="NCBIfam" id="TIGR01411">
    <property type="entry name" value="tatAE"/>
    <property type="match status" value="1"/>
</dbReference>
<dbReference type="PANTHER" id="PTHR42982">
    <property type="entry name" value="SEC-INDEPENDENT PROTEIN TRANSLOCASE PROTEIN TATA"/>
    <property type="match status" value="1"/>
</dbReference>
<dbReference type="PANTHER" id="PTHR42982:SF1">
    <property type="entry name" value="SEC-INDEPENDENT PROTEIN TRANSLOCASE PROTEIN TATA"/>
    <property type="match status" value="1"/>
</dbReference>
<dbReference type="Pfam" id="PF02416">
    <property type="entry name" value="TatA_B_E"/>
    <property type="match status" value="1"/>
</dbReference>
<sequence length="61" mass="6556">MGLSGISPLSLLLILAIIVALFGTSKLKTIGSDLGEAIKNFRKAMNSEETNDTQKDDHKPL</sequence>
<proteinExistence type="inferred from homology"/>
<name>TATA_LEGPC</name>
<accession>A5II94</accession>
<evidence type="ECO:0000255" key="1">
    <source>
        <dbReference type="HAMAP-Rule" id="MF_00236"/>
    </source>
</evidence>
<gene>
    <name evidence="1" type="primary">tatA</name>
    <name type="ordered locus">LPC_3207</name>
</gene>
<comment type="function">
    <text evidence="1">Part of the twin-arginine translocation (Tat) system that transports large folded proteins containing a characteristic twin-arginine motif in their signal peptide across membranes. TatA could form the protein-conducting channel of the Tat system.</text>
</comment>
<comment type="subunit">
    <text evidence="1">The Tat system comprises two distinct complexes: a TatABC complex, containing multiple copies of TatA, TatB and TatC subunits, and a separate TatA complex, containing only TatA subunits. Substrates initially bind to the TatABC complex, which probably triggers association of the separate TatA complex to form the active translocon.</text>
</comment>
<comment type="subcellular location">
    <subcellularLocation>
        <location evidence="1">Cell inner membrane</location>
        <topology evidence="1">Single-pass membrane protein</topology>
    </subcellularLocation>
</comment>
<comment type="similarity">
    <text evidence="1">Belongs to the TatA/E family.</text>
</comment>